<feature type="chain" id="PRO_0000113961" description="Transcription termination/antitermination protein NusG">
    <location>
        <begin position="1"/>
        <end position="179"/>
    </location>
</feature>
<feature type="domain" description="KOW" evidence="1">
    <location>
        <begin position="130"/>
        <end position="157"/>
    </location>
</feature>
<comment type="function">
    <text evidence="1">Participates in transcription elongation, termination and antitermination.</text>
</comment>
<comment type="mass spectrometry" mass="20385.2" method="Electrospray" evidence="2"/>
<comment type="similarity">
    <text evidence="1">Belongs to the NusG family.</text>
</comment>
<comment type="sequence caution" evidence="3">
    <conflict type="erroneous initiation">
        <sequence resource="EMBL-CDS" id="AAT86320"/>
    </conflict>
</comment>
<name>NUSG_STRP6</name>
<evidence type="ECO:0000255" key="1">
    <source>
        <dbReference type="HAMAP-Rule" id="MF_00948"/>
    </source>
</evidence>
<evidence type="ECO:0000269" key="2">
    <source ref="2"/>
</evidence>
<evidence type="ECO:0000305" key="3"/>
<accession>Q5XE43</accession>
<accession>P82547</accession>
<proteinExistence type="evidence at protein level"/>
<keyword id="KW-0903">Direct protein sequencing</keyword>
<keyword id="KW-0804">Transcription</keyword>
<keyword id="KW-0889">Transcription antitermination</keyword>
<keyword id="KW-0805">Transcription regulation</keyword>
<keyword id="KW-0806">Transcription termination</keyword>
<gene>
    <name evidence="1" type="primary">nusG</name>
    <name type="ordered locus">M6_Spy0185</name>
</gene>
<organism>
    <name type="scientific">Streptococcus pyogenes serotype M6 (strain ATCC BAA-946 / MGAS10394)</name>
    <dbReference type="NCBI Taxonomy" id="286636"/>
    <lineage>
        <taxon>Bacteria</taxon>
        <taxon>Bacillati</taxon>
        <taxon>Bacillota</taxon>
        <taxon>Bacilli</taxon>
        <taxon>Lactobacillales</taxon>
        <taxon>Streptococcaceae</taxon>
        <taxon>Streptococcus</taxon>
    </lineage>
</organism>
<protein>
    <recommendedName>
        <fullName evidence="1">Transcription termination/antitermination protein NusG</fullName>
    </recommendedName>
</protein>
<reference key="1">
    <citation type="journal article" date="2004" name="J. Infect. Dis.">
        <title>Progress toward characterization of the group A Streptococcus metagenome: complete genome sequence of a macrolide-resistant serotype M6 strain.</title>
        <authorList>
            <person name="Banks D.J."/>
            <person name="Porcella S.F."/>
            <person name="Barbian K.D."/>
            <person name="Beres S.B."/>
            <person name="Philips L.E."/>
            <person name="Voyich J.M."/>
            <person name="DeLeo F.R."/>
            <person name="Martin J.M."/>
            <person name="Somerville G.A."/>
            <person name="Musser J.M."/>
        </authorList>
    </citation>
    <scope>NUCLEOTIDE SEQUENCE [LARGE SCALE GENOMIC DNA]</scope>
    <source>
        <strain>ATCC BAA-946 / MGAS10394</strain>
    </source>
</reference>
<reference key="2">
    <citation type="submission" date="2000-05" db="UniProtKB">
        <title>Two-dimensional gel electrophoresis map of Streptococcus pyogenes proteins.</title>
        <authorList>
            <person name="Hogan D.A."/>
            <person name="Du P."/>
            <person name="Stevenson T.I."/>
            <person name="Whitton M."/>
            <person name="Kilby G.W."/>
            <person name="Rogers J."/>
            <person name="VanBogelen R.A."/>
        </authorList>
    </citation>
    <scope>PROTEIN SEQUENCE OF 42-53 AND 100-111</scope>
    <scope>MASS SPECTROMETRY</scope>
    <source>
        <strain>JRS4 / Serotype M6</strain>
    </source>
</reference>
<sequence length="179" mass="20385">MLDSFDKGWFVLQTYSGYENKVKENLLQRAQTYNMLDNILRVEIPTQTVNVEKNGQTKEIEENRFPGYVLVEMVMTDEAWFVVRNTPNVTGFVGSHGNRSKPTPLLEEEIRAILLSMGQTIDVFDTNIKEGDVVQIIDGAFMGQEGRVVEIENNKVKLMLNMFGSETVAEVELYQIAEL</sequence>
<dbReference type="EMBL" id="CP000003">
    <property type="protein sequence ID" value="AAT86320.1"/>
    <property type="status" value="ALT_INIT"/>
    <property type="molecule type" value="Genomic_DNA"/>
</dbReference>
<dbReference type="RefSeq" id="WP_002987881.1">
    <property type="nucleotide sequence ID" value="NC_006086.1"/>
</dbReference>
<dbReference type="SMR" id="Q5XE43"/>
<dbReference type="GeneID" id="83689799"/>
<dbReference type="KEGG" id="spa:M6_Spy0185"/>
<dbReference type="HOGENOM" id="CLU_067287_1_1_9"/>
<dbReference type="Proteomes" id="UP000001167">
    <property type="component" value="Chromosome"/>
</dbReference>
<dbReference type="GO" id="GO:0005829">
    <property type="term" value="C:cytosol"/>
    <property type="evidence" value="ECO:0007669"/>
    <property type="project" value="TreeGrafter"/>
</dbReference>
<dbReference type="GO" id="GO:0006353">
    <property type="term" value="P:DNA-templated transcription termination"/>
    <property type="evidence" value="ECO:0007669"/>
    <property type="project" value="UniProtKB-UniRule"/>
</dbReference>
<dbReference type="GO" id="GO:0032784">
    <property type="term" value="P:regulation of DNA-templated transcription elongation"/>
    <property type="evidence" value="ECO:0007669"/>
    <property type="project" value="InterPro"/>
</dbReference>
<dbReference type="GO" id="GO:0031564">
    <property type="term" value="P:transcription antitermination"/>
    <property type="evidence" value="ECO:0007669"/>
    <property type="project" value="UniProtKB-UniRule"/>
</dbReference>
<dbReference type="GO" id="GO:0140673">
    <property type="term" value="P:transcription elongation-coupled chromatin remodeling"/>
    <property type="evidence" value="ECO:0007669"/>
    <property type="project" value="InterPro"/>
</dbReference>
<dbReference type="CDD" id="cd06091">
    <property type="entry name" value="KOW_NusG"/>
    <property type="match status" value="1"/>
</dbReference>
<dbReference type="CDD" id="cd09891">
    <property type="entry name" value="NGN_Bact_1"/>
    <property type="match status" value="1"/>
</dbReference>
<dbReference type="FunFam" id="3.30.70.940:FF:000002">
    <property type="entry name" value="Transcription termination/antitermination protein NusG"/>
    <property type="match status" value="1"/>
</dbReference>
<dbReference type="Gene3D" id="2.30.30.30">
    <property type="match status" value="1"/>
</dbReference>
<dbReference type="Gene3D" id="3.30.70.940">
    <property type="entry name" value="NusG, N-terminal domain"/>
    <property type="match status" value="1"/>
</dbReference>
<dbReference type="HAMAP" id="MF_00948">
    <property type="entry name" value="NusG"/>
    <property type="match status" value="1"/>
</dbReference>
<dbReference type="InterPro" id="IPR005824">
    <property type="entry name" value="KOW"/>
</dbReference>
<dbReference type="InterPro" id="IPR047050">
    <property type="entry name" value="NGN"/>
</dbReference>
<dbReference type="InterPro" id="IPR006645">
    <property type="entry name" value="NGN-like_dom"/>
</dbReference>
<dbReference type="InterPro" id="IPR036735">
    <property type="entry name" value="NGN_dom_sf"/>
</dbReference>
<dbReference type="InterPro" id="IPR043425">
    <property type="entry name" value="NusG-like"/>
</dbReference>
<dbReference type="InterPro" id="IPR014722">
    <property type="entry name" value="Rib_uL2_dom2"/>
</dbReference>
<dbReference type="InterPro" id="IPR001062">
    <property type="entry name" value="Transcrpt_antiterm_NusG"/>
</dbReference>
<dbReference type="InterPro" id="IPR008991">
    <property type="entry name" value="Translation_prot_SH3-like_sf"/>
</dbReference>
<dbReference type="NCBIfam" id="TIGR00922">
    <property type="entry name" value="nusG"/>
    <property type="match status" value="1"/>
</dbReference>
<dbReference type="PANTHER" id="PTHR30265">
    <property type="entry name" value="RHO-INTERACTING TRANSCRIPTION TERMINATION FACTOR NUSG"/>
    <property type="match status" value="1"/>
</dbReference>
<dbReference type="PANTHER" id="PTHR30265:SF2">
    <property type="entry name" value="TRANSCRIPTION TERMINATION_ANTITERMINATION PROTEIN NUSG"/>
    <property type="match status" value="1"/>
</dbReference>
<dbReference type="Pfam" id="PF00467">
    <property type="entry name" value="KOW"/>
    <property type="match status" value="1"/>
</dbReference>
<dbReference type="Pfam" id="PF02357">
    <property type="entry name" value="NusG"/>
    <property type="match status" value="1"/>
</dbReference>
<dbReference type="PRINTS" id="PR00338">
    <property type="entry name" value="NUSGTNSCPFCT"/>
</dbReference>
<dbReference type="SMART" id="SM00739">
    <property type="entry name" value="KOW"/>
    <property type="match status" value="1"/>
</dbReference>
<dbReference type="SMART" id="SM00738">
    <property type="entry name" value="NGN"/>
    <property type="match status" value="1"/>
</dbReference>
<dbReference type="SUPFAM" id="SSF82679">
    <property type="entry name" value="N-utilization substance G protein NusG, N-terminal domain"/>
    <property type="match status" value="1"/>
</dbReference>
<dbReference type="SUPFAM" id="SSF50104">
    <property type="entry name" value="Translation proteins SH3-like domain"/>
    <property type="match status" value="1"/>
</dbReference>